<gene>
    <name evidence="1" type="primary">pxpA</name>
    <name type="ordered locus">azo0043</name>
</gene>
<keyword id="KW-0067">ATP-binding</keyword>
<keyword id="KW-0378">Hydrolase</keyword>
<keyword id="KW-0547">Nucleotide-binding</keyword>
<keyword id="KW-1185">Reference proteome</keyword>
<proteinExistence type="inferred from homology"/>
<reference key="1">
    <citation type="journal article" date="2006" name="Nat. Biotechnol.">
        <title>Complete genome of the mutualistic, N2-fixing grass endophyte Azoarcus sp. strain BH72.</title>
        <authorList>
            <person name="Krause A."/>
            <person name="Ramakumar A."/>
            <person name="Bartels D."/>
            <person name="Battistoni F."/>
            <person name="Bekel T."/>
            <person name="Boch J."/>
            <person name="Boehm M."/>
            <person name="Friedrich F."/>
            <person name="Hurek T."/>
            <person name="Krause L."/>
            <person name="Linke B."/>
            <person name="McHardy A.C."/>
            <person name="Sarkar A."/>
            <person name="Schneiker S."/>
            <person name="Syed A.A."/>
            <person name="Thauer R."/>
            <person name="Vorhoelter F.-J."/>
            <person name="Weidner S."/>
            <person name="Puehler A."/>
            <person name="Reinhold-Hurek B."/>
            <person name="Kaiser O."/>
            <person name="Goesmann A."/>
        </authorList>
    </citation>
    <scope>NUCLEOTIDE SEQUENCE [LARGE SCALE GENOMIC DNA]</scope>
    <source>
        <strain>BH72</strain>
    </source>
</reference>
<accession>A1K1F6</accession>
<organism>
    <name type="scientific">Azoarcus sp. (strain BH72)</name>
    <dbReference type="NCBI Taxonomy" id="418699"/>
    <lineage>
        <taxon>Bacteria</taxon>
        <taxon>Pseudomonadati</taxon>
        <taxon>Pseudomonadota</taxon>
        <taxon>Betaproteobacteria</taxon>
        <taxon>Rhodocyclales</taxon>
        <taxon>Zoogloeaceae</taxon>
        <taxon>Azoarcus</taxon>
    </lineage>
</organism>
<feature type="chain" id="PRO_1000132037" description="5-oxoprolinase subunit A">
    <location>
        <begin position="1"/>
        <end position="256"/>
    </location>
</feature>
<protein>
    <recommendedName>
        <fullName evidence="1">5-oxoprolinase subunit A</fullName>
        <shortName evidence="1">5-OPase subunit A</shortName>
        <ecNumber evidence="1">3.5.2.9</ecNumber>
    </recommendedName>
    <alternativeName>
        <fullName evidence="1">5-oxoprolinase (ATP-hydrolyzing) subunit A</fullName>
    </alternativeName>
</protein>
<name>PXPA_AZOSB</name>
<comment type="function">
    <text evidence="1">Catalyzes the cleavage of 5-oxoproline to form L-glutamate coupled to the hydrolysis of ATP to ADP and inorganic phosphate.</text>
</comment>
<comment type="catalytic activity">
    <reaction evidence="1">
        <text>5-oxo-L-proline + ATP + 2 H2O = L-glutamate + ADP + phosphate + H(+)</text>
        <dbReference type="Rhea" id="RHEA:10348"/>
        <dbReference type="ChEBI" id="CHEBI:15377"/>
        <dbReference type="ChEBI" id="CHEBI:15378"/>
        <dbReference type="ChEBI" id="CHEBI:29985"/>
        <dbReference type="ChEBI" id="CHEBI:30616"/>
        <dbReference type="ChEBI" id="CHEBI:43474"/>
        <dbReference type="ChEBI" id="CHEBI:58402"/>
        <dbReference type="ChEBI" id="CHEBI:456216"/>
        <dbReference type="EC" id="3.5.2.9"/>
    </reaction>
</comment>
<comment type="subunit">
    <text evidence="1">Forms a complex composed of PxpA, PxpB and PxpC.</text>
</comment>
<comment type="similarity">
    <text evidence="1">Belongs to the LamB/PxpA family.</text>
</comment>
<dbReference type="EC" id="3.5.2.9" evidence="1"/>
<dbReference type="EMBL" id="AM406670">
    <property type="protein sequence ID" value="CAL92661.1"/>
    <property type="molecule type" value="Genomic_DNA"/>
</dbReference>
<dbReference type="RefSeq" id="WP_011763780.1">
    <property type="nucleotide sequence ID" value="NC_008702.1"/>
</dbReference>
<dbReference type="SMR" id="A1K1F6"/>
<dbReference type="STRING" id="62928.azo0043"/>
<dbReference type="KEGG" id="azo:azo0043"/>
<dbReference type="eggNOG" id="COG1540">
    <property type="taxonomic scope" value="Bacteria"/>
</dbReference>
<dbReference type="HOGENOM" id="CLU_069535_0_0_4"/>
<dbReference type="Proteomes" id="UP000002588">
    <property type="component" value="Chromosome"/>
</dbReference>
<dbReference type="GO" id="GO:0017168">
    <property type="term" value="F:5-oxoprolinase (ATP-hydrolyzing) activity"/>
    <property type="evidence" value="ECO:0007669"/>
    <property type="project" value="UniProtKB-UniRule"/>
</dbReference>
<dbReference type="GO" id="GO:0005524">
    <property type="term" value="F:ATP binding"/>
    <property type="evidence" value="ECO:0007669"/>
    <property type="project" value="UniProtKB-UniRule"/>
</dbReference>
<dbReference type="GO" id="GO:0005975">
    <property type="term" value="P:carbohydrate metabolic process"/>
    <property type="evidence" value="ECO:0007669"/>
    <property type="project" value="InterPro"/>
</dbReference>
<dbReference type="CDD" id="cd10787">
    <property type="entry name" value="LamB_YcsF_like"/>
    <property type="match status" value="1"/>
</dbReference>
<dbReference type="Gene3D" id="3.20.20.370">
    <property type="entry name" value="Glycoside hydrolase/deacetylase"/>
    <property type="match status" value="1"/>
</dbReference>
<dbReference type="HAMAP" id="MF_00691">
    <property type="entry name" value="PxpA"/>
    <property type="match status" value="1"/>
</dbReference>
<dbReference type="InterPro" id="IPR011330">
    <property type="entry name" value="Glyco_hydro/deAcase_b/a-brl"/>
</dbReference>
<dbReference type="InterPro" id="IPR005501">
    <property type="entry name" value="LamB/YcsF/PxpA-like"/>
</dbReference>
<dbReference type="NCBIfam" id="NF003814">
    <property type="entry name" value="PRK05406.1-3"/>
    <property type="match status" value="1"/>
</dbReference>
<dbReference type="NCBIfam" id="NF003816">
    <property type="entry name" value="PRK05406.1-5"/>
    <property type="match status" value="1"/>
</dbReference>
<dbReference type="PANTHER" id="PTHR30292:SF0">
    <property type="entry name" value="5-OXOPROLINASE SUBUNIT A"/>
    <property type="match status" value="1"/>
</dbReference>
<dbReference type="PANTHER" id="PTHR30292">
    <property type="entry name" value="UNCHARACTERIZED PROTEIN YBGL-RELATED"/>
    <property type="match status" value="1"/>
</dbReference>
<dbReference type="Pfam" id="PF03746">
    <property type="entry name" value="LamB_YcsF"/>
    <property type="match status" value="1"/>
</dbReference>
<dbReference type="SUPFAM" id="SSF88713">
    <property type="entry name" value="Glycoside hydrolase/deacetylase"/>
    <property type="match status" value="1"/>
</dbReference>
<sequence>MMKINLNADLGESFGAWKMGEDDALLQVVRSANIACGFHAGDPLVMRNTVRMALAAGVSLGAHPAYPDLQGFGRRPMKMAPAELEAAVIYQLGALAGIAAAEGGRLSHVKPHGALSNQACEDAELAATVVRAVRAFDRELILLAPALSELHAVGERAGLRVAAEIFADRAYTDAATLAARTQPGAVIHDHDEIIAHVLRMLDAGGIVAQSGKVMKTVMHSVCVHGDTPGAVQSARRLAETLAAKGWELVGLPEMGE</sequence>
<evidence type="ECO:0000255" key="1">
    <source>
        <dbReference type="HAMAP-Rule" id="MF_00691"/>
    </source>
</evidence>